<gene>
    <name type="primary">MT-CYB</name>
    <name type="synonym">COB</name>
    <name type="synonym">CYTB</name>
    <name type="synonym">MTCYB</name>
</gene>
<evidence type="ECO:0000250" key="1"/>
<evidence type="ECO:0000250" key="2">
    <source>
        <dbReference type="UniProtKB" id="P00157"/>
    </source>
</evidence>
<evidence type="ECO:0000255" key="3">
    <source>
        <dbReference type="PROSITE-ProRule" id="PRU00967"/>
    </source>
</evidence>
<evidence type="ECO:0000255" key="4">
    <source>
        <dbReference type="PROSITE-ProRule" id="PRU00968"/>
    </source>
</evidence>
<accession>O21411</accession>
<accession>O21410</accession>
<accession>Q1XIK5</accession>
<geneLocation type="mitochondrion"/>
<comment type="function">
    <text evidence="2">Component of the ubiquinol-cytochrome c reductase complex (complex III or cytochrome b-c1 complex) that is part of the mitochondrial respiratory chain. The b-c1 complex mediates electron transfer from ubiquinol to cytochrome c. Contributes to the generation of a proton gradient across the mitochondrial membrane that is then used for ATP synthesis.</text>
</comment>
<comment type="cofactor">
    <cofactor evidence="2">
        <name>heme b</name>
        <dbReference type="ChEBI" id="CHEBI:60344"/>
    </cofactor>
    <text evidence="2">Binds 2 heme b groups non-covalently.</text>
</comment>
<comment type="subunit">
    <text evidence="2">The cytochrome bc1 complex contains 11 subunits: 3 respiratory subunits (MT-CYB, CYC1 and UQCRFS1), 2 core proteins (UQCRC1 and UQCRC2) and 6 low-molecular weight proteins (UQCRH/QCR6, UQCRB/QCR7, UQCRQ/QCR8, UQCR10/QCR9, UQCR11/QCR10 and a cleavage product of UQCRFS1). This cytochrome bc1 complex then forms a dimer.</text>
</comment>
<comment type="subcellular location">
    <subcellularLocation>
        <location evidence="2">Mitochondrion inner membrane</location>
        <topology evidence="2">Multi-pass membrane protein</topology>
    </subcellularLocation>
</comment>
<comment type="miscellaneous">
    <text evidence="1">Heme 1 (or BL or b562) is low-potential and absorbs at about 562 nm, and heme 2 (or BH or b566) is high-potential and absorbs at about 566 nm.</text>
</comment>
<comment type="similarity">
    <text evidence="3 4">Belongs to the cytochrome b family.</text>
</comment>
<comment type="caution">
    <text evidence="2">The full-length protein contains only eight transmembrane helices, not nine as predicted by bioinformatics tools.</text>
</comment>
<name>CYB_SORDA</name>
<dbReference type="EMBL" id="AB175126">
    <property type="protein sequence ID" value="BAE92691.1"/>
    <property type="molecule type" value="Genomic_DNA"/>
</dbReference>
<dbReference type="EMBL" id="D85356">
    <property type="protein sequence ID" value="BAA21349.1"/>
    <property type="molecule type" value="Genomic_DNA"/>
</dbReference>
<dbReference type="EMBL" id="D85342">
    <property type="protein sequence ID" value="BAA21335.1"/>
    <property type="molecule type" value="Genomic_DNA"/>
</dbReference>
<dbReference type="SMR" id="O21411"/>
<dbReference type="GO" id="GO:0005743">
    <property type="term" value="C:mitochondrial inner membrane"/>
    <property type="evidence" value="ECO:0007669"/>
    <property type="project" value="UniProtKB-SubCell"/>
</dbReference>
<dbReference type="GO" id="GO:0045275">
    <property type="term" value="C:respiratory chain complex III"/>
    <property type="evidence" value="ECO:0007669"/>
    <property type="project" value="InterPro"/>
</dbReference>
<dbReference type="GO" id="GO:0046872">
    <property type="term" value="F:metal ion binding"/>
    <property type="evidence" value="ECO:0007669"/>
    <property type="project" value="UniProtKB-KW"/>
</dbReference>
<dbReference type="GO" id="GO:0008121">
    <property type="term" value="F:ubiquinol-cytochrome-c reductase activity"/>
    <property type="evidence" value="ECO:0007669"/>
    <property type="project" value="InterPro"/>
</dbReference>
<dbReference type="GO" id="GO:0006122">
    <property type="term" value="P:mitochondrial electron transport, ubiquinol to cytochrome c"/>
    <property type="evidence" value="ECO:0007669"/>
    <property type="project" value="TreeGrafter"/>
</dbReference>
<dbReference type="CDD" id="cd00290">
    <property type="entry name" value="cytochrome_b_C"/>
    <property type="match status" value="1"/>
</dbReference>
<dbReference type="CDD" id="cd00284">
    <property type="entry name" value="Cytochrome_b_N"/>
    <property type="match status" value="1"/>
</dbReference>
<dbReference type="FunFam" id="1.20.810.10:FF:000002">
    <property type="entry name" value="Cytochrome b"/>
    <property type="match status" value="1"/>
</dbReference>
<dbReference type="Gene3D" id="1.20.810.10">
    <property type="entry name" value="Cytochrome Bc1 Complex, Chain C"/>
    <property type="match status" value="1"/>
</dbReference>
<dbReference type="InterPro" id="IPR005798">
    <property type="entry name" value="Cyt_b/b6_C"/>
</dbReference>
<dbReference type="InterPro" id="IPR036150">
    <property type="entry name" value="Cyt_b/b6_C_sf"/>
</dbReference>
<dbReference type="InterPro" id="IPR005797">
    <property type="entry name" value="Cyt_b/b6_N"/>
</dbReference>
<dbReference type="InterPro" id="IPR027387">
    <property type="entry name" value="Cytb/b6-like_sf"/>
</dbReference>
<dbReference type="InterPro" id="IPR030689">
    <property type="entry name" value="Cytochrome_b"/>
</dbReference>
<dbReference type="InterPro" id="IPR048260">
    <property type="entry name" value="Cytochrome_b_C_euk/bac"/>
</dbReference>
<dbReference type="InterPro" id="IPR048259">
    <property type="entry name" value="Cytochrome_b_N_euk/bac"/>
</dbReference>
<dbReference type="InterPro" id="IPR016174">
    <property type="entry name" value="Di-haem_cyt_TM"/>
</dbReference>
<dbReference type="PANTHER" id="PTHR19271">
    <property type="entry name" value="CYTOCHROME B"/>
    <property type="match status" value="1"/>
</dbReference>
<dbReference type="PANTHER" id="PTHR19271:SF16">
    <property type="entry name" value="CYTOCHROME B"/>
    <property type="match status" value="1"/>
</dbReference>
<dbReference type="Pfam" id="PF00032">
    <property type="entry name" value="Cytochrom_B_C"/>
    <property type="match status" value="1"/>
</dbReference>
<dbReference type="Pfam" id="PF00033">
    <property type="entry name" value="Cytochrome_B"/>
    <property type="match status" value="1"/>
</dbReference>
<dbReference type="PIRSF" id="PIRSF038885">
    <property type="entry name" value="COB"/>
    <property type="match status" value="1"/>
</dbReference>
<dbReference type="SUPFAM" id="SSF81648">
    <property type="entry name" value="a domain/subunit of cytochrome bc1 complex (Ubiquinol-cytochrome c reductase)"/>
    <property type="match status" value="1"/>
</dbReference>
<dbReference type="SUPFAM" id="SSF81342">
    <property type="entry name" value="Transmembrane di-heme cytochromes"/>
    <property type="match status" value="1"/>
</dbReference>
<dbReference type="PROSITE" id="PS51003">
    <property type="entry name" value="CYTB_CTER"/>
    <property type="match status" value="1"/>
</dbReference>
<dbReference type="PROSITE" id="PS51002">
    <property type="entry name" value="CYTB_NTER"/>
    <property type="match status" value="1"/>
</dbReference>
<protein>
    <recommendedName>
        <fullName>Cytochrome b</fullName>
    </recommendedName>
    <alternativeName>
        <fullName>Complex III subunit 3</fullName>
    </alternativeName>
    <alternativeName>
        <fullName>Complex III subunit III</fullName>
    </alternativeName>
    <alternativeName>
        <fullName>Cytochrome b-c1 complex subunit 3</fullName>
    </alternativeName>
    <alternativeName>
        <fullName>Ubiquinol-cytochrome-c reductase complex cytochrome b subunit</fullName>
    </alternativeName>
</protein>
<keyword id="KW-0249">Electron transport</keyword>
<keyword id="KW-0349">Heme</keyword>
<keyword id="KW-0408">Iron</keyword>
<keyword id="KW-0472">Membrane</keyword>
<keyword id="KW-0479">Metal-binding</keyword>
<keyword id="KW-0496">Mitochondrion</keyword>
<keyword id="KW-0999">Mitochondrion inner membrane</keyword>
<keyword id="KW-0679">Respiratory chain</keyword>
<keyword id="KW-0812">Transmembrane</keyword>
<keyword id="KW-1133">Transmembrane helix</keyword>
<keyword id="KW-0813">Transport</keyword>
<keyword id="KW-0830">Ubiquinone</keyword>
<sequence length="379" mass="42596">MTNLRKTHPLMKIVNSSFIDLPAPSNISSWWNFGSLLGVCLIIQILTGLFLAMHYTSDTMTAFSSVTHICRDVNYGWLIRYLHANGASMFFICLFLHVGRGLYYGSYMYLETWNIGVLLLFAVMATAFMGYVLPWGQMSFWGATVITNLLSAIPYIGSDLVEWIWGGFSVDKATLTRFFAFHFILPFIIAALAGVHLLFLHETGSNNPSGLSSDADKIPFHPYYTIKDILGVLLLILALTSLVLFSPDLLGDPDNYTPANPLNTPPHIKPEWYFLFAYAILRSIPNKLGGVLALVLSILILAVVPFLHTSKQRSMMFRPFSQCLFWILVADLLTLTWIGGQPVEHPFIIIGQLASILYFLLILVIMPITSLFENNLLKW</sequence>
<feature type="chain" id="PRO_0000061556" description="Cytochrome b">
    <location>
        <begin position="1"/>
        <end position="379"/>
    </location>
</feature>
<feature type="transmembrane region" description="Helical" evidence="2">
    <location>
        <begin position="33"/>
        <end position="53"/>
    </location>
</feature>
<feature type="transmembrane region" description="Helical" evidence="2">
    <location>
        <begin position="77"/>
        <end position="98"/>
    </location>
</feature>
<feature type="transmembrane region" description="Helical" evidence="2">
    <location>
        <begin position="113"/>
        <end position="133"/>
    </location>
</feature>
<feature type="transmembrane region" description="Helical" evidence="2">
    <location>
        <begin position="178"/>
        <end position="198"/>
    </location>
</feature>
<feature type="transmembrane region" description="Helical" evidence="2">
    <location>
        <begin position="226"/>
        <end position="246"/>
    </location>
</feature>
<feature type="transmembrane region" description="Helical" evidence="2">
    <location>
        <begin position="288"/>
        <end position="308"/>
    </location>
</feature>
<feature type="transmembrane region" description="Helical" evidence="2">
    <location>
        <begin position="320"/>
        <end position="340"/>
    </location>
</feature>
<feature type="transmembrane region" description="Helical" evidence="2">
    <location>
        <begin position="347"/>
        <end position="367"/>
    </location>
</feature>
<feature type="binding site" description="axial binding residue" evidence="2">
    <location>
        <position position="83"/>
    </location>
    <ligand>
        <name>heme b</name>
        <dbReference type="ChEBI" id="CHEBI:60344"/>
        <label>b562</label>
    </ligand>
    <ligandPart>
        <name>Fe</name>
        <dbReference type="ChEBI" id="CHEBI:18248"/>
    </ligandPart>
</feature>
<feature type="binding site" description="axial binding residue" evidence="2">
    <location>
        <position position="97"/>
    </location>
    <ligand>
        <name>heme b</name>
        <dbReference type="ChEBI" id="CHEBI:60344"/>
        <label>b566</label>
    </ligand>
    <ligandPart>
        <name>Fe</name>
        <dbReference type="ChEBI" id="CHEBI:18248"/>
    </ligandPart>
</feature>
<feature type="binding site" description="axial binding residue" evidence="2">
    <location>
        <position position="182"/>
    </location>
    <ligand>
        <name>heme b</name>
        <dbReference type="ChEBI" id="CHEBI:60344"/>
        <label>b562</label>
    </ligand>
    <ligandPart>
        <name>Fe</name>
        <dbReference type="ChEBI" id="CHEBI:18248"/>
    </ligandPart>
</feature>
<feature type="binding site" description="axial binding residue" evidence="2">
    <location>
        <position position="196"/>
    </location>
    <ligand>
        <name>heme b</name>
        <dbReference type="ChEBI" id="CHEBI:60344"/>
        <label>b566</label>
    </ligand>
    <ligandPart>
        <name>Fe</name>
        <dbReference type="ChEBI" id="CHEBI:18248"/>
    </ligandPart>
</feature>
<feature type="binding site" evidence="2">
    <location>
        <position position="201"/>
    </location>
    <ligand>
        <name>a ubiquinone</name>
        <dbReference type="ChEBI" id="CHEBI:16389"/>
    </ligand>
</feature>
<feature type="sequence variant" description="In strain: Isolate 95/8/19-1.">
    <original>L</original>
    <variation>F</variation>
    <location>
        <position position="82"/>
    </location>
</feature>
<feature type="sequence variant" description="In strain: Isolate #696.">
    <original>A</original>
    <variation>V</variation>
    <location>
        <position position="84"/>
    </location>
</feature>
<organism>
    <name type="scientific">Sorex daphaenodon</name>
    <name type="common">Large-toothed Siberian shrew</name>
    <dbReference type="NCBI Taxonomy" id="62272"/>
    <lineage>
        <taxon>Eukaryota</taxon>
        <taxon>Metazoa</taxon>
        <taxon>Chordata</taxon>
        <taxon>Craniata</taxon>
        <taxon>Vertebrata</taxon>
        <taxon>Euteleostomi</taxon>
        <taxon>Mammalia</taxon>
        <taxon>Eutheria</taxon>
        <taxon>Laurasiatheria</taxon>
        <taxon>Eulipotyphla</taxon>
        <taxon>Soricidae</taxon>
        <taxon>Soricinae</taxon>
        <taxon>Sorex</taxon>
    </lineage>
</organism>
<reference key="1">
    <citation type="submission" date="2004-03" db="EMBL/GenBank/DDBJ databases">
        <title>Molecular phylogenetics of the Soricidae (Insectivora, Mammalia) based on mitochondrial cytochrome b gene sequences.</title>
        <authorList>
            <person name="Ohdachi S.D."/>
            <person name="Iwasa M.A."/>
            <person name="Abe H."/>
            <person name="Vogel P."/>
            <person name="Oshida T."/>
            <person name="Lin L.K."/>
            <person name="Hasegawa M."/>
        </authorList>
    </citation>
    <scope>NUCLEOTIDE SEQUENCE [GENOMIC DNA]</scope>
    <source>
        <strain>Isolate SO-2Kmisc-49</strain>
        <tissue>Liver</tissue>
    </source>
</reference>
<reference key="2">
    <citation type="journal article" date="1997" name="Zool. Sci.">
        <title>Molecular phylogeny from nucleotide sequences of the mitochondrial cytochrome b gene and evolutionary history of Eurasian soricine shrews (Mammalia, Insectivora).</title>
        <authorList>
            <person name="Ohdachi S."/>
            <person name="Masuda R."/>
            <person name="Abe H."/>
            <person name="Adachi J."/>
            <person name="Dokuchaev N.E."/>
            <person name="Haukisalmi V."/>
            <person name="Yoshida M.C."/>
        </authorList>
    </citation>
    <scope>NUCLEOTIDE SEQUENCE [GENOMIC DNA] OF 1-134</scope>
    <source>
        <strain>Isolate #696</strain>
        <strain>Isolate 95/8/19-1</strain>
        <tissue>Hindfoot</tissue>
    </source>
</reference>
<proteinExistence type="inferred from homology"/>